<dbReference type="EC" id="2.5.1.41" evidence="1"/>
<dbReference type="EMBL" id="CP000504">
    <property type="protein sequence ID" value="ABL87621.1"/>
    <property type="molecule type" value="Genomic_DNA"/>
</dbReference>
<dbReference type="RefSeq" id="WP_011762198.1">
    <property type="nucleotide sequence ID" value="NC_008701.1"/>
</dbReference>
<dbReference type="SMR" id="A1RRN9"/>
<dbReference type="STRING" id="384616.Pisl_0443"/>
<dbReference type="GeneID" id="4617622"/>
<dbReference type="KEGG" id="pis:Pisl_0443"/>
<dbReference type="eggNOG" id="arCOG01085">
    <property type="taxonomic scope" value="Archaea"/>
</dbReference>
<dbReference type="HOGENOM" id="CLU_068610_0_0_2"/>
<dbReference type="OrthoDB" id="7409at2157"/>
<dbReference type="UniPathway" id="UPA00940"/>
<dbReference type="Proteomes" id="UP000002595">
    <property type="component" value="Chromosome"/>
</dbReference>
<dbReference type="GO" id="GO:0005737">
    <property type="term" value="C:cytoplasm"/>
    <property type="evidence" value="ECO:0007669"/>
    <property type="project" value="UniProtKB-SubCell"/>
</dbReference>
<dbReference type="GO" id="GO:0000287">
    <property type="term" value="F:magnesium ion binding"/>
    <property type="evidence" value="ECO:0007669"/>
    <property type="project" value="UniProtKB-UniRule"/>
</dbReference>
<dbReference type="GO" id="GO:0047294">
    <property type="term" value="F:phosphoglycerol geranylgeranyltransferase activity"/>
    <property type="evidence" value="ECO:0007669"/>
    <property type="project" value="UniProtKB-UniRule"/>
</dbReference>
<dbReference type="GO" id="GO:0046474">
    <property type="term" value="P:glycerophospholipid biosynthetic process"/>
    <property type="evidence" value="ECO:0007669"/>
    <property type="project" value="UniProtKB-UniRule"/>
</dbReference>
<dbReference type="CDD" id="cd02812">
    <property type="entry name" value="PcrB_like"/>
    <property type="match status" value="1"/>
</dbReference>
<dbReference type="FunFam" id="3.20.20.390:FF:000001">
    <property type="entry name" value="Heptaprenylglyceryl phosphate synthase"/>
    <property type="match status" value="1"/>
</dbReference>
<dbReference type="Gene3D" id="3.20.20.390">
    <property type="entry name" value="FMN-linked oxidoreductases"/>
    <property type="match status" value="1"/>
</dbReference>
<dbReference type="HAMAP" id="MF_00112">
    <property type="entry name" value="GGGP_HepGP_synthase"/>
    <property type="match status" value="1"/>
</dbReference>
<dbReference type="InterPro" id="IPR039074">
    <property type="entry name" value="GGGP/HepGP_synthase_I"/>
</dbReference>
<dbReference type="InterPro" id="IPR038597">
    <property type="entry name" value="GGGP/HepGP_synthase_sf"/>
</dbReference>
<dbReference type="InterPro" id="IPR008205">
    <property type="entry name" value="GGGP_HepGP_synthase"/>
</dbReference>
<dbReference type="InterPro" id="IPR010946">
    <property type="entry name" value="GGGP_synth"/>
</dbReference>
<dbReference type="NCBIfam" id="TIGR01769">
    <property type="entry name" value="GGGP"/>
    <property type="match status" value="1"/>
</dbReference>
<dbReference type="NCBIfam" id="TIGR01768">
    <property type="entry name" value="GGGP-family"/>
    <property type="match status" value="1"/>
</dbReference>
<dbReference type="NCBIfam" id="NF003198">
    <property type="entry name" value="PRK04169.1-2"/>
    <property type="match status" value="1"/>
</dbReference>
<dbReference type="PANTHER" id="PTHR40029">
    <property type="match status" value="1"/>
</dbReference>
<dbReference type="PANTHER" id="PTHR40029:SF2">
    <property type="entry name" value="HEPTAPRENYLGLYCERYL PHOSPHATE SYNTHASE"/>
    <property type="match status" value="1"/>
</dbReference>
<dbReference type="Pfam" id="PF01884">
    <property type="entry name" value="PcrB"/>
    <property type="match status" value="1"/>
</dbReference>
<dbReference type="SUPFAM" id="SSF51395">
    <property type="entry name" value="FMN-linked oxidoreductases"/>
    <property type="match status" value="1"/>
</dbReference>
<evidence type="ECO:0000255" key="1">
    <source>
        <dbReference type="HAMAP-Rule" id="MF_00112"/>
    </source>
</evidence>
<gene>
    <name type="ordered locus">Pisl_0443</name>
</gene>
<name>GGGPS_PYRIL</name>
<organism>
    <name type="scientific">Pyrobaculum islandicum (strain DSM 4184 / JCM 9189 / GEO3)</name>
    <dbReference type="NCBI Taxonomy" id="384616"/>
    <lineage>
        <taxon>Archaea</taxon>
        <taxon>Thermoproteota</taxon>
        <taxon>Thermoprotei</taxon>
        <taxon>Thermoproteales</taxon>
        <taxon>Thermoproteaceae</taxon>
        <taxon>Pyrobaculum</taxon>
    </lineage>
</organism>
<reference key="1">
    <citation type="submission" date="2006-12" db="EMBL/GenBank/DDBJ databases">
        <title>Complete sequence of Pyrobaculum islandicum DSM 4184.</title>
        <authorList>
            <person name="Copeland A."/>
            <person name="Lucas S."/>
            <person name="Lapidus A."/>
            <person name="Barry K."/>
            <person name="Detter J.C."/>
            <person name="Glavina del Rio T."/>
            <person name="Dalin E."/>
            <person name="Tice H."/>
            <person name="Pitluck S."/>
            <person name="Meincke L."/>
            <person name="Brettin T."/>
            <person name="Bruce D."/>
            <person name="Han C."/>
            <person name="Tapia R."/>
            <person name="Gilna P."/>
            <person name="Schmutz J."/>
            <person name="Larimer F."/>
            <person name="Land M."/>
            <person name="Hauser L."/>
            <person name="Kyrpides N."/>
            <person name="Mikhailova N."/>
            <person name="Cozen A.E."/>
            <person name="Fitz-Gibbon S.T."/>
            <person name="House C.H."/>
            <person name="Saltikov C."/>
            <person name="Lowe T."/>
            <person name="Richardson P."/>
        </authorList>
    </citation>
    <scope>NUCLEOTIDE SEQUENCE [LARGE SCALE GENOMIC DNA]</scope>
    <source>
        <strain>DSM 4184 / JCM 9189 / GEO3</strain>
    </source>
</reference>
<keyword id="KW-0963">Cytoplasm</keyword>
<keyword id="KW-0444">Lipid biosynthesis</keyword>
<keyword id="KW-0443">Lipid metabolism</keyword>
<keyword id="KW-0460">Magnesium</keyword>
<keyword id="KW-0479">Metal-binding</keyword>
<keyword id="KW-0594">Phospholipid biosynthesis</keyword>
<keyword id="KW-1208">Phospholipid metabolism</keyword>
<keyword id="KW-0808">Transferase</keyword>
<sequence>MKLYEYLVEGTKHFTLIDPDKSVDYLKIAKYALEAGTDGILVGGSLGIRESQITQVVKDIKSIAHVPVVIFPGSISQLTDEADGVLFLSVLNSLDPYYIIGAQIQGAVLLAKHYPKLEVISTAYIIIGDGGAAGFVSMSKPIPYTRPDIVMAYALAANYIGFKAVYLEAGSGAPQPAPPEMVRAARRVFPRILIVGGGIRSGEVAYTIAREKPNVIVTGTLAEEKPEKLGEIIRAIKSA</sequence>
<protein>
    <recommendedName>
        <fullName evidence="1">Geranylgeranylglyceryl phosphate synthase</fullName>
        <shortName evidence="1">GGGP synthase</shortName>
        <shortName evidence="1">GGGPS</shortName>
        <ecNumber evidence="1">2.5.1.41</ecNumber>
    </recommendedName>
    <alternativeName>
        <fullName evidence="1">(S)-3-O-geranylgeranylglyceryl phosphate synthase</fullName>
    </alternativeName>
    <alternativeName>
        <fullName evidence="1">Phosphoglycerol geranylgeranyltransferase</fullName>
    </alternativeName>
</protein>
<accession>A1RRN9</accession>
<proteinExistence type="inferred from homology"/>
<feature type="chain" id="PRO_0000304188" description="Geranylgeranylglyceryl phosphate synthase">
    <location>
        <begin position="1"/>
        <end position="239"/>
    </location>
</feature>
<feature type="binding site" evidence="1">
    <location>
        <position position="18"/>
    </location>
    <ligand>
        <name>Mg(2+)</name>
        <dbReference type="ChEBI" id="CHEBI:18420"/>
    </ligand>
</feature>
<feature type="binding site" evidence="1">
    <location>
        <position position="45"/>
    </location>
    <ligand>
        <name>Mg(2+)</name>
        <dbReference type="ChEBI" id="CHEBI:18420"/>
    </ligand>
</feature>
<feature type="binding site" evidence="1">
    <location>
        <begin position="166"/>
        <end position="172"/>
    </location>
    <ligand>
        <name>sn-glycerol 1-phosphate</name>
        <dbReference type="ChEBI" id="CHEBI:57685"/>
    </ligand>
</feature>
<feature type="binding site" evidence="1">
    <location>
        <begin position="197"/>
        <end position="198"/>
    </location>
    <ligand>
        <name>sn-glycerol 1-phosphate</name>
        <dbReference type="ChEBI" id="CHEBI:57685"/>
    </ligand>
</feature>
<feature type="binding site" evidence="1">
    <location>
        <begin position="219"/>
        <end position="220"/>
    </location>
    <ligand>
        <name>sn-glycerol 1-phosphate</name>
        <dbReference type="ChEBI" id="CHEBI:57685"/>
    </ligand>
</feature>
<comment type="function">
    <text evidence="1">Prenyltransferase that catalyzes the transfer of the geranylgeranyl moiety of geranylgeranyl diphosphate (GGPP) to the C3 hydroxyl of sn-glycerol-1-phosphate (G1P). This reaction is the first ether-bond-formation step in the biosynthesis of archaeal membrane lipids.</text>
</comment>
<comment type="catalytic activity">
    <reaction evidence="1">
        <text>sn-glycerol 1-phosphate + (2E,6E,10E)-geranylgeranyl diphosphate = sn-3-O-(geranylgeranyl)glycerol 1-phosphate + diphosphate</text>
        <dbReference type="Rhea" id="RHEA:23404"/>
        <dbReference type="ChEBI" id="CHEBI:33019"/>
        <dbReference type="ChEBI" id="CHEBI:57677"/>
        <dbReference type="ChEBI" id="CHEBI:57685"/>
        <dbReference type="ChEBI" id="CHEBI:58756"/>
        <dbReference type="EC" id="2.5.1.41"/>
    </reaction>
</comment>
<comment type="cofactor">
    <cofactor evidence="1">
        <name>Mg(2+)</name>
        <dbReference type="ChEBI" id="CHEBI:18420"/>
    </cofactor>
</comment>
<comment type="pathway">
    <text evidence="1">Membrane lipid metabolism; glycerophospholipid metabolism.</text>
</comment>
<comment type="subcellular location">
    <subcellularLocation>
        <location evidence="1">Cytoplasm</location>
    </subcellularLocation>
</comment>
<comment type="similarity">
    <text evidence="1">Belongs to the GGGP/HepGP synthase family. Group II subfamily.</text>
</comment>